<keyword id="KW-0067">ATP-binding</keyword>
<keyword id="KW-0963">Cytoplasm</keyword>
<keyword id="KW-0324">Glycolysis</keyword>
<keyword id="KW-0418">Kinase</keyword>
<keyword id="KW-0547">Nucleotide-binding</keyword>
<keyword id="KW-0808">Transferase</keyword>
<proteinExistence type="inferred from homology"/>
<evidence type="ECO:0000255" key="1">
    <source>
        <dbReference type="HAMAP-Rule" id="MF_00145"/>
    </source>
</evidence>
<feature type="chain" id="PRO_1000192825" description="Phosphoglycerate kinase">
    <location>
        <begin position="1"/>
        <end position="389"/>
    </location>
</feature>
<feature type="binding site" evidence="1">
    <location>
        <begin position="21"/>
        <end position="23"/>
    </location>
    <ligand>
        <name>substrate</name>
    </ligand>
</feature>
<feature type="binding site" evidence="1">
    <location>
        <position position="36"/>
    </location>
    <ligand>
        <name>substrate</name>
    </ligand>
</feature>
<feature type="binding site" evidence="1">
    <location>
        <begin position="59"/>
        <end position="62"/>
    </location>
    <ligand>
        <name>substrate</name>
    </ligand>
</feature>
<feature type="binding site" evidence="1">
    <location>
        <position position="112"/>
    </location>
    <ligand>
        <name>substrate</name>
    </ligand>
</feature>
<feature type="binding site" evidence="1">
    <location>
        <position position="145"/>
    </location>
    <ligand>
        <name>substrate</name>
    </ligand>
</feature>
<feature type="binding site" evidence="1">
    <location>
        <position position="196"/>
    </location>
    <ligand>
        <name>ATP</name>
        <dbReference type="ChEBI" id="CHEBI:30616"/>
    </ligand>
</feature>
<feature type="binding site" evidence="1">
    <location>
        <position position="318"/>
    </location>
    <ligand>
        <name>ATP</name>
        <dbReference type="ChEBI" id="CHEBI:30616"/>
    </ligand>
</feature>
<feature type="binding site" evidence="1">
    <location>
        <begin position="344"/>
        <end position="347"/>
    </location>
    <ligand>
        <name>ATP</name>
        <dbReference type="ChEBI" id="CHEBI:30616"/>
    </ligand>
</feature>
<name>PGK_DESDA</name>
<sequence length="389" mass="40940">MPVTKMQDLDLGGKTVVIREDLNVPMKDGIITNDKRIRAALPTIQLALEKGAGVIVLSHLGRPTEGQYDQQFSLAPVADRLAQLLGQPVTLAKSLDEAKTAPGQVTLLENVRFLPGEKKNDPELAAKLAGLGDVYVMDAFGSAHRAHASTEGAVRTAAVACAGPLLQAELEAFDKVLDNPARPVVAIVGGAKVSTKLTLLENLLEKVDVLIVGGGIANTFLAAAGYMVGKSLYEEDLLPEAQKIMALAKTLNKELPLPVDVITAEELAPRQQTMLHAVGDVPGDQMILDIGPETLTLYEKFLSKAATVVWNGPVGAFEIEPFGDGTKALAEYLSDSKAFVVVGGGDSVAAVEKYGLADRMGYISTGGGASLELLEGKKLPSVAALEDRA</sequence>
<organism>
    <name type="scientific">Desulfovibrio desulfuricans (strain ATCC 27774 / DSM 6949 / MB)</name>
    <dbReference type="NCBI Taxonomy" id="525146"/>
    <lineage>
        <taxon>Bacteria</taxon>
        <taxon>Pseudomonadati</taxon>
        <taxon>Thermodesulfobacteriota</taxon>
        <taxon>Desulfovibrionia</taxon>
        <taxon>Desulfovibrionales</taxon>
        <taxon>Desulfovibrionaceae</taxon>
        <taxon>Desulfovibrio</taxon>
    </lineage>
</organism>
<gene>
    <name evidence="1" type="primary">pgk</name>
    <name type="ordered locus">Ddes_0479</name>
</gene>
<comment type="catalytic activity">
    <reaction evidence="1">
        <text>(2R)-3-phosphoglycerate + ATP = (2R)-3-phospho-glyceroyl phosphate + ADP</text>
        <dbReference type="Rhea" id="RHEA:14801"/>
        <dbReference type="ChEBI" id="CHEBI:30616"/>
        <dbReference type="ChEBI" id="CHEBI:57604"/>
        <dbReference type="ChEBI" id="CHEBI:58272"/>
        <dbReference type="ChEBI" id="CHEBI:456216"/>
        <dbReference type="EC" id="2.7.2.3"/>
    </reaction>
</comment>
<comment type="pathway">
    <text evidence="1">Carbohydrate degradation; glycolysis; pyruvate from D-glyceraldehyde 3-phosphate: step 2/5.</text>
</comment>
<comment type="subunit">
    <text evidence="1">Monomer.</text>
</comment>
<comment type="subcellular location">
    <subcellularLocation>
        <location evidence="1">Cytoplasm</location>
    </subcellularLocation>
</comment>
<comment type="similarity">
    <text evidence="1">Belongs to the phosphoglycerate kinase family.</text>
</comment>
<accession>B8J4D3</accession>
<protein>
    <recommendedName>
        <fullName evidence="1">Phosphoglycerate kinase</fullName>
        <ecNumber evidence="1">2.7.2.3</ecNumber>
    </recommendedName>
</protein>
<dbReference type="EC" id="2.7.2.3" evidence="1"/>
<dbReference type="EMBL" id="CP001358">
    <property type="protein sequence ID" value="ACL48391.1"/>
    <property type="molecule type" value="Genomic_DNA"/>
</dbReference>
<dbReference type="SMR" id="B8J4D3"/>
<dbReference type="STRING" id="525146.Ddes_0479"/>
<dbReference type="KEGG" id="dds:Ddes_0479"/>
<dbReference type="eggNOG" id="COG0126">
    <property type="taxonomic scope" value="Bacteria"/>
</dbReference>
<dbReference type="HOGENOM" id="CLU_025427_0_2_7"/>
<dbReference type="UniPathway" id="UPA00109">
    <property type="reaction ID" value="UER00185"/>
</dbReference>
<dbReference type="GO" id="GO:0005829">
    <property type="term" value="C:cytosol"/>
    <property type="evidence" value="ECO:0007669"/>
    <property type="project" value="TreeGrafter"/>
</dbReference>
<dbReference type="GO" id="GO:0043531">
    <property type="term" value="F:ADP binding"/>
    <property type="evidence" value="ECO:0007669"/>
    <property type="project" value="TreeGrafter"/>
</dbReference>
<dbReference type="GO" id="GO:0005524">
    <property type="term" value="F:ATP binding"/>
    <property type="evidence" value="ECO:0007669"/>
    <property type="project" value="UniProtKB-KW"/>
</dbReference>
<dbReference type="GO" id="GO:0004618">
    <property type="term" value="F:phosphoglycerate kinase activity"/>
    <property type="evidence" value="ECO:0007669"/>
    <property type="project" value="UniProtKB-UniRule"/>
</dbReference>
<dbReference type="GO" id="GO:0006094">
    <property type="term" value="P:gluconeogenesis"/>
    <property type="evidence" value="ECO:0007669"/>
    <property type="project" value="TreeGrafter"/>
</dbReference>
<dbReference type="GO" id="GO:0006096">
    <property type="term" value="P:glycolytic process"/>
    <property type="evidence" value="ECO:0007669"/>
    <property type="project" value="UniProtKB-UniRule"/>
</dbReference>
<dbReference type="FunFam" id="3.40.50.1260:FF:000001">
    <property type="entry name" value="Phosphoglycerate kinase"/>
    <property type="match status" value="1"/>
</dbReference>
<dbReference type="FunFam" id="3.40.50.1260:FF:000002">
    <property type="entry name" value="Phosphoglycerate kinase"/>
    <property type="match status" value="1"/>
</dbReference>
<dbReference type="Gene3D" id="3.40.50.1260">
    <property type="entry name" value="Phosphoglycerate kinase, N-terminal domain"/>
    <property type="match status" value="2"/>
</dbReference>
<dbReference type="HAMAP" id="MF_00145">
    <property type="entry name" value="Phosphoglyc_kinase"/>
    <property type="match status" value="1"/>
</dbReference>
<dbReference type="InterPro" id="IPR001576">
    <property type="entry name" value="Phosphoglycerate_kinase"/>
</dbReference>
<dbReference type="InterPro" id="IPR015911">
    <property type="entry name" value="Phosphoglycerate_kinase_CS"/>
</dbReference>
<dbReference type="InterPro" id="IPR015824">
    <property type="entry name" value="Phosphoglycerate_kinase_N"/>
</dbReference>
<dbReference type="InterPro" id="IPR036043">
    <property type="entry name" value="Phosphoglycerate_kinase_sf"/>
</dbReference>
<dbReference type="PANTHER" id="PTHR11406">
    <property type="entry name" value="PHOSPHOGLYCERATE KINASE"/>
    <property type="match status" value="1"/>
</dbReference>
<dbReference type="PANTHER" id="PTHR11406:SF23">
    <property type="entry name" value="PHOSPHOGLYCERATE KINASE 1, CHLOROPLASTIC-RELATED"/>
    <property type="match status" value="1"/>
</dbReference>
<dbReference type="Pfam" id="PF00162">
    <property type="entry name" value="PGK"/>
    <property type="match status" value="1"/>
</dbReference>
<dbReference type="PIRSF" id="PIRSF000724">
    <property type="entry name" value="Pgk"/>
    <property type="match status" value="1"/>
</dbReference>
<dbReference type="PRINTS" id="PR00477">
    <property type="entry name" value="PHGLYCKINASE"/>
</dbReference>
<dbReference type="SUPFAM" id="SSF53748">
    <property type="entry name" value="Phosphoglycerate kinase"/>
    <property type="match status" value="1"/>
</dbReference>
<dbReference type="PROSITE" id="PS00111">
    <property type="entry name" value="PGLYCERATE_KINASE"/>
    <property type="match status" value="1"/>
</dbReference>
<reference key="1">
    <citation type="submission" date="2009-01" db="EMBL/GenBank/DDBJ databases">
        <title>Complete sequence of Desulfovibrio desulfuricans subsp. desulfuricans str. ATCC 27774.</title>
        <authorList>
            <consortium name="US DOE Joint Genome Institute"/>
            <person name="Lucas S."/>
            <person name="Copeland A."/>
            <person name="Lapidus A."/>
            <person name="Glavina del Rio T."/>
            <person name="Tice H."/>
            <person name="Bruce D."/>
            <person name="Goodwin L."/>
            <person name="Pitluck S."/>
            <person name="Sims D."/>
            <person name="Lu M."/>
            <person name="Kiss H."/>
            <person name="Meineke L."/>
            <person name="Brettin T."/>
            <person name="Detter J.C."/>
            <person name="Han C."/>
            <person name="Larimer F."/>
            <person name="Land M."/>
            <person name="Hauser L."/>
            <person name="Kyrpides N."/>
            <person name="Ovchinnikova G."/>
            <person name="Hazen T.C."/>
        </authorList>
    </citation>
    <scope>NUCLEOTIDE SEQUENCE [LARGE SCALE GENOMIC DNA]</scope>
    <source>
        <strain>ATCC 27774 / DSM 6949 / MB</strain>
    </source>
</reference>